<dbReference type="EC" id="6.1.1.23" evidence="1"/>
<dbReference type="EMBL" id="CP000688">
    <property type="protein sequence ID" value="ABQ17228.1"/>
    <property type="molecule type" value="Genomic_DNA"/>
</dbReference>
<dbReference type="SMR" id="A5FRE3"/>
<dbReference type="KEGG" id="deb:DehaBAV1_0643"/>
<dbReference type="PATRIC" id="fig|216389.18.peg.691"/>
<dbReference type="HOGENOM" id="CLU_014330_3_2_0"/>
<dbReference type="GO" id="GO:0005737">
    <property type="term" value="C:cytoplasm"/>
    <property type="evidence" value="ECO:0007669"/>
    <property type="project" value="UniProtKB-SubCell"/>
</dbReference>
<dbReference type="GO" id="GO:0004815">
    <property type="term" value="F:aspartate-tRNA ligase activity"/>
    <property type="evidence" value="ECO:0007669"/>
    <property type="project" value="UniProtKB-UniRule"/>
</dbReference>
<dbReference type="GO" id="GO:0050560">
    <property type="term" value="F:aspartate-tRNA(Asn) ligase activity"/>
    <property type="evidence" value="ECO:0007669"/>
    <property type="project" value="UniProtKB-EC"/>
</dbReference>
<dbReference type="GO" id="GO:0005524">
    <property type="term" value="F:ATP binding"/>
    <property type="evidence" value="ECO:0007669"/>
    <property type="project" value="UniProtKB-UniRule"/>
</dbReference>
<dbReference type="GO" id="GO:0003676">
    <property type="term" value="F:nucleic acid binding"/>
    <property type="evidence" value="ECO:0007669"/>
    <property type="project" value="InterPro"/>
</dbReference>
<dbReference type="GO" id="GO:0006422">
    <property type="term" value="P:aspartyl-tRNA aminoacylation"/>
    <property type="evidence" value="ECO:0007669"/>
    <property type="project" value="UniProtKB-UniRule"/>
</dbReference>
<dbReference type="CDD" id="cd00777">
    <property type="entry name" value="AspRS_core"/>
    <property type="match status" value="1"/>
</dbReference>
<dbReference type="CDD" id="cd04317">
    <property type="entry name" value="EcAspRS_like_N"/>
    <property type="match status" value="1"/>
</dbReference>
<dbReference type="Gene3D" id="3.30.930.10">
    <property type="entry name" value="Bira Bifunctional Protein, Domain 2"/>
    <property type="match status" value="1"/>
</dbReference>
<dbReference type="Gene3D" id="3.30.1360.30">
    <property type="entry name" value="GAD-like domain"/>
    <property type="match status" value="1"/>
</dbReference>
<dbReference type="Gene3D" id="2.40.50.140">
    <property type="entry name" value="Nucleic acid-binding proteins"/>
    <property type="match status" value="1"/>
</dbReference>
<dbReference type="HAMAP" id="MF_00044">
    <property type="entry name" value="Asp_tRNA_synth_type1"/>
    <property type="match status" value="1"/>
</dbReference>
<dbReference type="InterPro" id="IPR004364">
    <property type="entry name" value="Aa-tRNA-synt_II"/>
</dbReference>
<dbReference type="InterPro" id="IPR006195">
    <property type="entry name" value="aa-tRNA-synth_II"/>
</dbReference>
<dbReference type="InterPro" id="IPR045864">
    <property type="entry name" value="aa-tRNA-synth_II/BPL/LPL"/>
</dbReference>
<dbReference type="InterPro" id="IPR004524">
    <property type="entry name" value="Asp-tRNA-ligase_1"/>
</dbReference>
<dbReference type="InterPro" id="IPR047089">
    <property type="entry name" value="Asp-tRNA-ligase_1_N"/>
</dbReference>
<dbReference type="InterPro" id="IPR002312">
    <property type="entry name" value="Asp/Asn-tRNA-synth_IIb"/>
</dbReference>
<dbReference type="InterPro" id="IPR047090">
    <property type="entry name" value="AspRS_core"/>
</dbReference>
<dbReference type="InterPro" id="IPR004115">
    <property type="entry name" value="GAD-like_sf"/>
</dbReference>
<dbReference type="InterPro" id="IPR029351">
    <property type="entry name" value="GAD_dom"/>
</dbReference>
<dbReference type="InterPro" id="IPR012340">
    <property type="entry name" value="NA-bd_OB-fold"/>
</dbReference>
<dbReference type="InterPro" id="IPR004365">
    <property type="entry name" value="NA-bd_OB_tRNA"/>
</dbReference>
<dbReference type="NCBIfam" id="TIGR00459">
    <property type="entry name" value="aspS_bact"/>
    <property type="match status" value="1"/>
</dbReference>
<dbReference type="NCBIfam" id="NF001750">
    <property type="entry name" value="PRK00476.1"/>
    <property type="match status" value="1"/>
</dbReference>
<dbReference type="PANTHER" id="PTHR22594:SF5">
    <property type="entry name" value="ASPARTATE--TRNA LIGASE, MITOCHONDRIAL"/>
    <property type="match status" value="1"/>
</dbReference>
<dbReference type="PANTHER" id="PTHR22594">
    <property type="entry name" value="ASPARTYL/LYSYL-TRNA SYNTHETASE"/>
    <property type="match status" value="1"/>
</dbReference>
<dbReference type="Pfam" id="PF02938">
    <property type="entry name" value="GAD"/>
    <property type="match status" value="1"/>
</dbReference>
<dbReference type="Pfam" id="PF00152">
    <property type="entry name" value="tRNA-synt_2"/>
    <property type="match status" value="1"/>
</dbReference>
<dbReference type="Pfam" id="PF01336">
    <property type="entry name" value="tRNA_anti-codon"/>
    <property type="match status" value="1"/>
</dbReference>
<dbReference type="PRINTS" id="PR01042">
    <property type="entry name" value="TRNASYNTHASP"/>
</dbReference>
<dbReference type="SUPFAM" id="SSF55681">
    <property type="entry name" value="Class II aaRS and biotin synthetases"/>
    <property type="match status" value="1"/>
</dbReference>
<dbReference type="SUPFAM" id="SSF55261">
    <property type="entry name" value="GAD domain-like"/>
    <property type="match status" value="1"/>
</dbReference>
<dbReference type="SUPFAM" id="SSF50249">
    <property type="entry name" value="Nucleic acid-binding proteins"/>
    <property type="match status" value="1"/>
</dbReference>
<dbReference type="PROSITE" id="PS50862">
    <property type="entry name" value="AA_TRNA_LIGASE_II"/>
    <property type="match status" value="1"/>
</dbReference>
<comment type="function">
    <text evidence="1">Aspartyl-tRNA synthetase with relaxed tRNA specificity since it is able to aspartylate not only its cognate tRNA(Asp) but also tRNA(Asn). Reaction proceeds in two steps: L-aspartate is first activated by ATP to form Asp-AMP and then transferred to the acceptor end of tRNA(Asp/Asn).</text>
</comment>
<comment type="catalytic activity">
    <reaction evidence="1">
        <text>tRNA(Asx) + L-aspartate + ATP = L-aspartyl-tRNA(Asx) + AMP + diphosphate</text>
        <dbReference type="Rhea" id="RHEA:18349"/>
        <dbReference type="Rhea" id="RHEA-COMP:9710"/>
        <dbReference type="Rhea" id="RHEA-COMP:9711"/>
        <dbReference type="ChEBI" id="CHEBI:29991"/>
        <dbReference type="ChEBI" id="CHEBI:30616"/>
        <dbReference type="ChEBI" id="CHEBI:33019"/>
        <dbReference type="ChEBI" id="CHEBI:78442"/>
        <dbReference type="ChEBI" id="CHEBI:78516"/>
        <dbReference type="ChEBI" id="CHEBI:456215"/>
        <dbReference type="EC" id="6.1.1.23"/>
    </reaction>
</comment>
<comment type="subunit">
    <text evidence="1">Homodimer.</text>
</comment>
<comment type="subcellular location">
    <subcellularLocation>
        <location evidence="1">Cytoplasm</location>
    </subcellularLocation>
</comment>
<comment type="similarity">
    <text evidence="1">Belongs to the class-II aminoacyl-tRNA synthetase family. Type 1 subfamily.</text>
</comment>
<protein>
    <recommendedName>
        <fullName evidence="1">Aspartate--tRNA(Asp/Asn) ligase</fullName>
        <ecNumber evidence="1">6.1.1.23</ecNumber>
    </recommendedName>
    <alternativeName>
        <fullName evidence="1">Aspartyl-tRNA synthetase</fullName>
        <shortName evidence="1">AspRS</shortName>
    </alternativeName>
    <alternativeName>
        <fullName evidence="1">Non-discriminating aspartyl-tRNA synthetase</fullName>
        <shortName evidence="1">ND-AspRS</shortName>
    </alternativeName>
</protein>
<organism>
    <name type="scientific">Dehalococcoides mccartyi (strain ATCC BAA-2100 / JCM 16839 / KCTC 5957 / BAV1)</name>
    <dbReference type="NCBI Taxonomy" id="216389"/>
    <lineage>
        <taxon>Bacteria</taxon>
        <taxon>Bacillati</taxon>
        <taxon>Chloroflexota</taxon>
        <taxon>Dehalococcoidia</taxon>
        <taxon>Dehalococcoidales</taxon>
        <taxon>Dehalococcoidaceae</taxon>
        <taxon>Dehalococcoides</taxon>
    </lineage>
</organism>
<proteinExistence type="inferred from homology"/>
<sequence length="598" mass="66976">MLKTHSCALTQENVGTEVTLAGWVHRRRDHGGVIFIDLRDREGIVQVVFNPEQSAACLDIGKELRSEYVLQVKGVVSHRPAGTENNRMPSGMVEVVAVHAKILNAAKTPPFYINEEVEVDESLRLKYRYLDIRRQGMKNNLIIRHKAVRFMREFLNDQGFIEIETPILIKSTPEGARDYLVPSRLFPGKFFALPQSPQQLKQLLMVAGMEKYYQVARCFRDEDLRADRQPEFTQLDMEMSFVDEEDMMKLMEDLFTGLVANVRPDMKYNKKFPRISFADATEKYGCDKPDLRFGMELADITDIGASSAFGVFKNVAAQGGAIKAISAPGCGGYNKSQQEELINLAKKYGAAGLVPISLGVENGELKDLTMEMVKSVAAKYLALEEIKTIAERSGAKPGDLILIVAGARKMVNTVLGEMRNQLAVKLNLCDKNELSFAFVVDFPLFQWDEEGKRWDSVHHPFTAPLESDMPLMDTDPGRVGSRAYDVVCNGYEIAGGSIRIHQADLQRKVFHLLGYNDEQIDERFGHLLEAFEFGAPPHGGVAPGIDRFVMLLAGETSIREVISFPKNQAAQDLLFGAPSVVDDKQIRDLHIRIQAEKE</sequence>
<accession>A5FRE3</accession>
<keyword id="KW-0030">Aminoacyl-tRNA synthetase</keyword>
<keyword id="KW-0067">ATP-binding</keyword>
<keyword id="KW-0963">Cytoplasm</keyword>
<keyword id="KW-0436">Ligase</keyword>
<keyword id="KW-0547">Nucleotide-binding</keyword>
<keyword id="KW-0648">Protein biosynthesis</keyword>
<name>SYDND_DEHMB</name>
<reference key="1">
    <citation type="submission" date="2007-05" db="EMBL/GenBank/DDBJ databases">
        <title>Complete sequence of Dehalococcoides sp. BAV1.</title>
        <authorList>
            <consortium name="US DOE Joint Genome Institute"/>
            <person name="Copeland A."/>
            <person name="Lucas S."/>
            <person name="Lapidus A."/>
            <person name="Barry K."/>
            <person name="Detter J.C."/>
            <person name="Glavina del Rio T."/>
            <person name="Hammon N."/>
            <person name="Israni S."/>
            <person name="Pitluck S."/>
            <person name="Lowry S."/>
            <person name="Clum A."/>
            <person name="Schmutz J."/>
            <person name="Larimer F."/>
            <person name="Land M."/>
            <person name="Hauser L."/>
            <person name="Kyrpides N."/>
            <person name="Kim E."/>
            <person name="Ritalahti K.M."/>
            <person name="Loeffler F."/>
            <person name="Richardson P."/>
        </authorList>
    </citation>
    <scope>NUCLEOTIDE SEQUENCE [LARGE SCALE GENOMIC DNA]</scope>
    <source>
        <strain>ATCC BAA-2100 / JCM 16839 / KCTC 5957 / BAV1</strain>
    </source>
</reference>
<evidence type="ECO:0000255" key="1">
    <source>
        <dbReference type="HAMAP-Rule" id="MF_00044"/>
    </source>
</evidence>
<gene>
    <name evidence="1" type="primary">aspS</name>
    <name type="ordered locus">DehaBAV1_0643</name>
</gene>
<feature type="chain" id="PRO_1000074700" description="Aspartate--tRNA(Asp/Asn) ligase">
    <location>
        <begin position="1"/>
        <end position="598"/>
    </location>
</feature>
<feature type="region of interest" description="Aspartate" evidence="1">
    <location>
        <begin position="198"/>
        <end position="201"/>
    </location>
</feature>
<feature type="binding site" evidence="1">
    <location>
        <position position="174"/>
    </location>
    <ligand>
        <name>L-aspartate</name>
        <dbReference type="ChEBI" id="CHEBI:29991"/>
    </ligand>
</feature>
<feature type="binding site" evidence="1">
    <location>
        <begin position="220"/>
        <end position="222"/>
    </location>
    <ligand>
        <name>ATP</name>
        <dbReference type="ChEBI" id="CHEBI:30616"/>
    </ligand>
</feature>
<feature type="binding site" evidence="1">
    <location>
        <position position="220"/>
    </location>
    <ligand>
        <name>L-aspartate</name>
        <dbReference type="ChEBI" id="CHEBI:29991"/>
    </ligand>
</feature>
<feature type="binding site" evidence="1">
    <location>
        <position position="229"/>
    </location>
    <ligand>
        <name>ATP</name>
        <dbReference type="ChEBI" id="CHEBI:30616"/>
    </ligand>
</feature>
<feature type="binding site" evidence="1">
    <location>
        <position position="458"/>
    </location>
    <ligand>
        <name>L-aspartate</name>
        <dbReference type="ChEBI" id="CHEBI:29991"/>
    </ligand>
</feature>
<feature type="binding site" evidence="1">
    <location>
        <position position="492"/>
    </location>
    <ligand>
        <name>ATP</name>
        <dbReference type="ChEBI" id="CHEBI:30616"/>
    </ligand>
</feature>
<feature type="binding site" evidence="1">
    <location>
        <position position="499"/>
    </location>
    <ligand>
        <name>L-aspartate</name>
        <dbReference type="ChEBI" id="CHEBI:29991"/>
    </ligand>
</feature>
<feature type="binding site" evidence="1">
    <location>
        <begin position="544"/>
        <end position="547"/>
    </location>
    <ligand>
        <name>ATP</name>
        <dbReference type="ChEBI" id="CHEBI:30616"/>
    </ligand>
</feature>
<feature type="site" description="Important for tRNA non-discrimination" evidence="1">
    <location>
        <position position="30"/>
    </location>
</feature>
<feature type="site" description="Important for tRNA non-discrimination" evidence="1">
    <location>
        <position position="82"/>
    </location>
</feature>